<protein>
    <recommendedName>
        <fullName evidence="1">4-diphosphocytidyl-2-C-methyl-D-erythritol kinase</fullName>
        <shortName evidence="1">CMK</shortName>
        <ecNumber evidence="1">2.7.1.148</ecNumber>
    </recommendedName>
    <alternativeName>
        <fullName evidence="1">4-(cytidine-5'-diphospho)-2-C-methyl-D-erythritol kinase</fullName>
    </alternativeName>
</protein>
<accession>Q63XL7</accession>
<evidence type="ECO:0000255" key="1">
    <source>
        <dbReference type="HAMAP-Rule" id="MF_00061"/>
    </source>
</evidence>
<name>ISPE_BURPS</name>
<keyword id="KW-0067">ATP-binding</keyword>
<keyword id="KW-0414">Isoprene biosynthesis</keyword>
<keyword id="KW-0418">Kinase</keyword>
<keyword id="KW-0547">Nucleotide-binding</keyword>
<keyword id="KW-1185">Reference proteome</keyword>
<keyword id="KW-0808">Transferase</keyword>
<feature type="chain" id="PRO_0000235074" description="4-diphosphocytidyl-2-C-methyl-D-erythritol kinase">
    <location>
        <begin position="1"/>
        <end position="293"/>
    </location>
</feature>
<feature type="active site" evidence="1">
    <location>
        <position position="16"/>
    </location>
</feature>
<feature type="active site" evidence="1">
    <location>
        <position position="141"/>
    </location>
</feature>
<feature type="binding site" evidence="1">
    <location>
        <begin position="99"/>
        <end position="109"/>
    </location>
    <ligand>
        <name>ATP</name>
        <dbReference type="ChEBI" id="CHEBI:30616"/>
    </ligand>
</feature>
<reference key="1">
    <citation type="journal article" date="2004" name="Proc. Natl. Acad. Sci. U.S.A.">
        <title>Genomic plasticity of the causative agent of melioidosis, Burkholderia pseudomallei.</title>
        <authorList>
            <person name="Holden M.T.G."/>
            <person name="Titball R.W."/>
            <person name="Peacock S.J."/>
            <person name="Cerdeno-Tarraga A.-M."/>
            <person name="Atkins T."/>
            <person name="Crossman L.C."/>
            <person name="Pitt T."/>
            <person name="Churcher C."/>
            <person name="Mungall K.L."/>
            <person name="Bentley S.D."/>
            <person name="Sebaihia M."/>
            <person name="Thomson N.R."/>
            <person name="Bason N."/>
            <person name="Beacham I.R."/>
            <person name="Brooks K."/>
            <person name="Brown K.A."/>
            <person name="Brown N.F."/>
            <person name="Challis G.L."/>
            <person name="Cherevach I."/>
            <person name="Chillingworth T."/>
            <person name="Cronin A."/>
            <person name="Crossett B."/>
            <person name="Davis P."/>
            <person name="DeShazer D."/>
            <person name="Feltwell T."/>
            <person name="Fraser A."/>
            <person name="Hance Z."/>
            <person name="Hauser H."/>
            <person name="Holroyd S."/>
            <person name="Jagels K."/>
            <person name="Keith K.E."/>
            <person name="Maddison M."/>
            <person name="Moule S."/>
            <person name="Price C."/>
            <person name="Quail M.A."/>
            <person name="Rabbinowitsch E."/>
            <person name="Rutherford K."/>
            <person name="Sanders M."/>
            <person name="Simmonds M."/>
            <person name="Songsivilai S."/>
            <person name="Stevens K."/>
            <person name="Tumapa S."/>
            <person name="Vesaratchavest M."/>
            <person name="Whitehead S."/>
            <person name="Yeats C."/>
            <person name="Barrell B.G."/>
            <person name="Oyston P.C.F."/>
            <person name="Parkhill J."/>
        </authorList>
    </citation>
    <scope>NUCLEOTIDE SEQUENCE [LARGE SCALE GENOMIC DNA]</scope>
    <source>
        <strain>K96243</strain>
    </source>
</reference>
<gene>
    <name evidence="1" type="primary">ispE</name>
    <name type="ordered locus">BPSL0523</name>
</gene>
<organism>
    <name type="scientific">Burkholderia pseudomallei (strain K96243)</name>
    <dbReference type="NCBI Taxonomy" id="272560"/>
    <lineage>
        <taxon>Bacteria</taxon>
        <taxon>Pseudomonadati</taxon>
        <taxon>Pseudomonadota</taxon>
        <taxon>Betaproteobacteria</taxon>
        <taxon>Burkholderiales</taxon>
        <taxon>Burkholderiaceae</taxon>
        <taxon>Burkholderia</taxon>
        <taxon>pseudomallei group</taxon>
    </lineage>
</organism>
<sequence>MTDTTRSLRDCLAPAKLNLFLHITGRRPDGYHALQSVFQLLDWGDRLHFTLRDDGKVSRVTDVPGVPEESDLVVRAASLLKAHAGATLGVDIEIDKRLPMGAGLGGGSSDAATTLLALNRLWRLDLPRTTLQSLAVKLGADVPFFVFGKNAFAEGIGEALQAVELPARWFLVVTPRVHVPTAAIFSEKSLTRDSKPITITDFLAQRGIDAGWPDSFGRNDMQPVVTSKYAEVAKVVEWFYNLTPARMTGSGASVFAAFKSKADAEAAQAKLPAGWNSAVAESMSEHPLFAFAS</sequence>
<proteinExistence type="inferred from homology"/>
<comment type="function">
    <text evidence="1">Catalyzes the phosphorylation of the position 2 hydroxy group of 4-diphosphocytidyl-2C-methyl-D-erythritol.</text>
</comment>
<comment type="catalytic activity">
    <reaction evidence="1">
        <text>4-CDP-2-C-methyl-D-erythritol + ATP = 4-CDP-2-C-methyl-D-erythritol 2-phosphate + ADP + H(+)</text>
        <dbReference type="Rhea" id="RHEA:18437"/>
        <dbReference type="ChEBI" id="CHEBI:15378"/>
        <dbReference type="ChEBI" id="CHEBI:30616"/>
        <dbReference type="ChEBI" id="CHEBI:57823"/>
        <dbReference type="ChEBI" id="CHEBI:57919"/>
        <dbReference type="ChEBI" id="CHEBI:456216"/>
        <dbReference type="EC" id="2.7.1.148"/>
    </reaction>
</comment>
<comment type="pathway">
    <text evidence="1">Isoprenoid biosynthesis; isopentenyl diphosphate biosynthesis via DXP pathway; isopentenyl diphosphate from 1-deoxy-D-xylulose 5-phosphate: step 3/6.</text>
</comment>
<comment type="similarity">
    <text evidence="1">Belongs to the GHMP kinase family. IspE subfamily.</text>
</comment>
<dbReference type="EC" id="2.7.1.148" evidence="1"/>
<dbReference type="EMBL" id="BX571965">
    <property type="protein sequence ID" value="CAH34512.1"/>
    <property type="molecule type" value="Genomic_DNA"/>
</dbReference>
<dbReference type="RefSeq" id="WP_004195241.1">
    <property type="nucleotide sequence ID" value="NZ_CP009538.1"/>
</dbReference>
<dbReference type="RefSeq" id="YP_107148.1">
    <property type="nucleotide sequence ID" value="NC_006350.1"/>
</dbReference>
<dbReference type="SMR" id="Q63XL7"/>
<dbReference type="STRING" id="272560.BPSL0523"/>
<dbReference type="GeneID" id="93059044"/>
<dbReference type="KEGG" id="bps:BPSL0523"/>
<dbReference type="PATRIC" id="fig|272560.51.peg.1125"/>
<dbReference type="eggNOG" id="COG1947">
    <property type="taxonomic scope" value="Bacteria"/>
</dbReference>
<dbReference type="UniPathway" id="UPA00056">
    <property type="reaction ID" value="UER00094"/>
</dbReference>
<dbReference type="Proteomes" id="UP000000605">
    <property type="component" value="Chromosome 1"/>
</dbReference>
<dbReference type="GO" id="GO:0050515">
    <property type="term" value="F:4-(cytidine 5'-diphospho)-2-C-methyl-D-erythritol kinase activity"/>
    <property type="evidence" value="ECO:0007669"/>
    <property type="project" value="UniProtKB-UniRule"/>
</dbReference>
<dbReference type="GO" id="GO:0005524">
    <property type="term" value="F:ATP binding"/>
    <property type="evidence" value="ECO:0007669"/>
    <property type="project" value="UniProtKB-UniRule"/>
</dbReference>
<dbReference type="GO" id="GO:0019288">
    <property type="term" value="P:isopentenyl diphosphate biosynthetic process, methylerythritol 4-phosphate pathway"/>
    <property type="evidence" value="ECO:0007669"/>
    <property type="project" value="UniProtKB-UniRule"/>
</dbReference>
<dbReference type="GO" id="GO:0016114">
    <property type="term" value="P:terpenoid biosynthetic process"/>
    <property type="evidence" value="ECO:0007669"/>
    <property type="project" value="InterPro"/>
</dbReference>
<dbReference type="Gene3D" id="3.30.230.10">
    <property type="match status" value="1"/>
</dbReference>
<dbReference type="Gene3D" id="3.30.70.890">
    <property type="entry name" value="GHMP kinase, C-terminal domain"/>
    <property type="match status" value="1"/>
</dbReference>
<dbReference type="HAMAP" id="MF_00061">
    <property type="entry name" value="IspE"/>
    <property type="match status" value="1"/>
</dbReference>
<dbReference type="InterPro" id="IPR013750">
    <property type="entry name" value="GHMP_kinase_C_dom"/>
</dbReference>
<dbReference type="InterPro" id="IPR036554">
    <property type="entry name" value="GHMP_kinase_C_sf"/>
</dbReference>
<dbReference type="InterPro" id="IPR006204">
    <property type="entry name" value="GHMP_kinase_N_dom"/>
</dbReference>
<dbReference type="InterPro" id="IPR004424">
    <property type="entry name" value="IspE"/>
</dbReference>
<dbReference type="InterPro" id="IPR020568">
    <property type="entry name" value="Ribosomal_Su5_D2-typ_SF"/>
</dbReference>
<dbReference type="InterPro" id="IPR014721">
    <property type="entry name" value="Ribsml_uS5_D2-typ_fold_subgr"/>
</dbReference>
<dbReference type="NCBIfam" id="TIGR00154">
    <property type="entry name" value="ispE"/>
    <property type="match status" value="1"/>
</dbReference>
<dbReference type="NCBIfam" id="NF011202">
    <property type="entry name" value="PRK14608.1"/>
    <property type="match status" value="1"/>
</dbReference>
<dbReference type="PANTHER" id="PTHR43527">
    <property type="entry name" value="4-DIPHOSPHOCYTIDYL-2-C-METHYL-D-ERYTHRITOL KINASE, CHLOROPLASTIC"/>
    <property type="match status" value="1"/>
</dbReference>
<dbReference type="PANTHER" id="PTHR43527:SF2">
    <property type="entry name" value="4-DIPHOSPHOCYTIDYL-2-C-METHYL-D-ERYTHRITOL KINASE, CHLOROPLASTIC"/>
    <property type="match status" value="1"/>
</dbReference>
<dbReference type="Pfam" id="PF08544">
    <property type="entry name" value="GHMP_kinases_C"/>
    <property type="match status" value="1"/>
</dbReference>
<dbReference type="Pfam" id="PF00288">
    <property type="entry name" value="GHMP_kinases_N"/>
    <property type="match status" value="1"/>
</dbReference>
<dbReference type="PIRSF" id="PIRSF010376">
    <property type="entry name" value="IspE"/>
    <property type="match status" value="1"/>
</dbReference>
<dbReference type="SUPFAM" id="SSF55060">
    <property type="entry name" value="GHMP Kinase, C-terminal domain"/>
    <property type="match status" value="1"/>
</dbReference>
<dbReference type="SUPFAM" id="SSF54211">
    <property type="entry name" value="Ribosomal protein S5 domain 2-like"/>
    <property type="match status" value="1"/>
</dbReference>